<gene>
    <name evidence="1" type="primary">acpS</name>
    <name type="ordered locus">Dtpsy_2615</name>
</gene>
<dbReference type="EC" id="2.7.8.7" evidence="1"/>
<dbReference type="EMBL" id="CP001392">
    <property type="protein sequence ID" value="ACM34050.1"/>
    <property type="molecule type" value="Genomic_DNA"/>
</dbReference>
<dbReference type="RefSeq" id="WP_011806383.1">
    <property type="nucleotide sequence ID" value="NC_011992.1"/>
</dbReference>
<dbReference type="SMR" id="B9MDP1"/>
<dbReference type="KEGG" id="dia:Dtpsy_2615"/>
<dbReference type="eggNOG" id="COG0736">
    <property type="taxonomic scope" value="Bacteria"/>
</dbReference>
<dbReference type="HOGENOM" id="CLU_089696_3_1_4"/>
<dbReference type="Proteomes" id="UP000000450">
    <property type="component" value="Chromosome"/>
</dbReference>
<dbReference type="GO" id="GO:0005737">
    <property type="term" value="C:cytoplasm"/>
    <property type="evidence" value="ECO:0007669"/>
    <property type="project" value="UniProtKB-SubCell"/>
</dbReference>
<dbReference type="GO" id="GO:0008897">
    <property type="term" value="F:holo-[acyl-carrier-protein] synthase activity"/>
    <property type="evidence" value="ECO:0007669"/>
    <property type="project" value="UniProtKB-UniRule"/>
</dbReference>
<dbReference type="GO" id="GO:0000287">
    <property type="term" value="F:magnesium ion binding"/>
    <property type="evidence" value="ECO:0007669"/>
    <property type="project" value="UniProtKB-UniRule"/>
</dbReference>
<dbReference type="GO" id="GO:0006633">
    <property type="term" value="P:fatty acid biosynthetic process"/>
    <property type="evidence" value="ECO:0007669"/>
    <property type="project" value="UniProtKB-UniRule"/>
</dbReference>
<dbReference type="Gene3D" id="3.90.470.20">
    <property type="entry name" value="4'-phosphopantetheinyl transferase domain"/>
    <property type="match status" value="1"/>
</dbReference>
<dbReference type="HAMAP" id="MF_00101">
    <property type="entry name" value="AcpS"/>
    <property type="match status" value="1"/>
</dbReference>
<dbReference type="InterPro" id="IPR008278">
    <property type="entry name" value="4-PPantetheinyl_Trfase_dom"/>
</dbReference>
<dbReference type="InterPro" id="IPR037143">
    <property type="entry name" value="4-PPantetheinyl_Trfase_dom_sf"/>
</dbReference>
<dbReference type="InterPro" id="IPR002582">
    <property type="entry name" value="ACPS"/>
</dbReference>
<dbReference type="InterPro" id="IPR004568">
    <property type="entry name" value="Ppantetheine-prot_Trfase_dom"/>
</dbReference>
<dbReference type="NCBIfam" id="TIGR00516">
    <property type="entry name" value="acpS"/>
    <property type="match status" value="1"/>
</dbReference>
<dbReference type="NCBIfam" id="TIGR00556">
    <property type="entry name" value="pantethn_trn"/>
    <property type="match status" value="1"/>
</dbReference>
<dbReference type="Pfam" id="PF01648">
    <property type="entry name" value="ACPS"/>
    <property type="match status" value="1"/>
</dbReference>
<dbReference type="SUPFAM" id="SSF56214">
    <property type="entry name" value="4'-phosphopantetheinyl transferase"/>
    <property type="match status" value="1"/>
</dbReference>
<feature type="chain" id="PRO_1000118806" description="Holo-[acyl-carrier-protein] synthase">
    <location>
        <begin position="1"/>
        <end position="130"/>
    </location>
</feature>
<feature type="binding site" evidence="1">
    <location>
        <position position="8"/>
    </location>
    <ligand>
        <name>Mg(2+)</name>
        <dbReference type="ChEBI" id="CHEBI:18420"/>
    </ligand>
</feature>
<feature type="binding site" evidence="1">
    <location>
        <position position="62"/>
    </location>
    <ligand>
        <name>Mg(2+)</name>
        <dbReference type="ChEBI" id="CHEBI:18420"/>
    </ligand>
</feature>
<comment type="function">
    <text evidence="1">Transfers the 4'-phosphopantetheine moiety from coenzyme A to a Ser of acyl-carrier-protein.</text>
</comment>
<comment type="catalytic activity">
    <reaction evidence="1">
        <text>apo-[ACP] + CoA = holo-[ACP] + adenosine 3',5'-bisphosphate + H(+)</text>
        <dbReference type="Rhea" id="RHEA:12068"/>
        <dbReference type="Rhea" id="RHEA-COMP:9685"/>
        <dbReference type="Rhea" id="RHEA-COMP:9690"/>
        <dbReference type="ChEBI" id="CHEBI:15378"/>
        <dbReference type="ChEBI" id="CHEBI:29999"/>
        <dbReference type="ChEBI" id="CHEBI:57287"/>
        <dbReference type="ChEBI" id="CHEBI:58343"/>
        <dbReference type="ChEBI" id="CHEBI:64479"/>
        <dbReference type="EC" id="2.7.8.7"/>
    </reaction>
</comment>
<comment type="cofactor">
    <cofactor evidence="1">
        <name>Mg(2+)</name>
        <dbReference type="ChEBI" id="CHEBI:18420"/>
    </cofactor>
</comment>
<comment type="subcellular location">
    <subcellularLocation>
        <location evidence="1">Cytoplasm</location>
    </subcellularLocation>
</comment>
<comment type="similarity">
    <text evidence="1">Belongs to the P-Pant transferase superfamily. AcpS family.</text>
</comment>
<reference key="1">
    <citation type="submission" date="2009-01" db="EMBL/GenBank/DDBJ databases">
        <title>Complete sequence of Diaphorobacter sp. TPSY.</title>
        <authorList>
            <consortium name="US DOE Joint Genome Institute"/>
            <person name="Lucas S."/>
            <person name="Copeland A."/>
            <person name="Lapidus A."/>
            <person name="Glavina del Rio T."/>
            <person name="Tice H."/>
            <person name="Bruce D."/>
            <person name="Goodwin L."/>
            <person name="Pitluck S."/>
            <person name="Chertkov O."/>
            <person name="Brettin T."/>
            <person name="Detter J.C."/>
            <person name="Han C."/>
            <person name="Larimer F."/>
            <person name="Land M."/>
            <person name="Hauser L."/>
            <person name="Kyrpides N."/>
            <person name="Mikhailova N."/>
            <person name="Coates J.D."/>
        </authorList>
    </citation>
    <scope>NUCLEOTIDE SEQUENCE [LARGE SCALE GENOMIC DNA]</scope>
    <source>
        <strain>TPSY</strain>
    </source>
</reference>
<evidence type="ECO:0000255" key="1">
    <source>
        <dbReference type="HAMAP-Rule" id="MF_00101"/>
    </source>
</evidence>
<name>ACPS_ACIET</name>
<organism>
    <name type="scientific">Acidovorax ebreus (strain TPSY)</name>
    <name type="common">Diaphorobacter sp. (strain TPSY)</name>
    <dbReference type="NCBI Taxonomy" id="535289"/>
    <lineage>
        <taxon>Bacteria</taxon>
        <taxon>Pseudomonadati</taxon>
        <taxon>Pseudomonadota</taxon>
        <taxon>Betaproteobacteria</taxon>
        <taxon>Burkholderiales</taxon>
        <taxon>Comamonadaceae</taxon>
        <taxon>Diaphorobacter</taxon>
    </lineage>
</organism>
<sequence length="130" mass="14562">MIYGIGTDICDVRRIRASLARHGDRFAEKVLADGELATWRARSARWPERGVRYLATRFSAKEAFSKAIGLGLHMPMTWRHCEVANLPSGQPTIVLHGALQDWFAARGLRCHLSVTDESDYAASFCVVEKD</sequence>
<keyword id="KW-0963">Cytoplasm</keyword>
<keyword id="KW-0275">Fatty acid biosynthesis</keyword>
<keyword id="KW-0276">Fatty acid metabolism</keyword>
<keyword id="KW-0444">Lipid biosynthesis</keyword>
<keyword id="KW-0443">Lipid metabolism</keyword>
<keyword id="KW-0460">Magnesium</keyword>
<keyword id="KW-0479">Metal-binding</keyword>
<keyword id="KW-1185">Reference proteome</keyword>
<keyword id="KW-0808">Transferase</keyword>
<accession>B9MDP1</accession>
<protein>
    <recommendedName>
        <fullName evidence="1">Holo-[acyl-carrier-protein] synthase</fullName>
        <shortName evidence="1">Holo-ACP synthase</shortName>
        <ecNumber evidence="1">2.7.8.7</ecNumber>
    </recommendedName>
    <alternativeName>
        <fullName evidence="1">4'-phosphopantetheinyl transferase AcpS</fullName>
    </alternativeName>
</protein>
<proteinExistence type="inferred from homology"/>